<accession>P80651</accession>
<accession>O59636</accession>
<gene>
    <name type="primary">mtrE</name>
    <name type="ordered locus">MM_1547</name>
</gene>
<evidence type="ECO:0000250" key="1"/>
<evidence type="ECO:0000255" key="2"/>
<evidence type="ECO:0000305" key="3"/>
<keyword id="KW-1003">Cell membrane</keyword>
<keyword id="KW-0903">Direct protein sequencing</keyword>
<keyword id="KW-0472">Membrane</keyword>
<keyword id="KW-0484">Methanogenesis</keyword>
<keyword id="KW-0489">Methyltransferase</keyword>
<keyword id="KW-0554">One-carbon metabolism</keyword>
<keyword id="KW-0808">Transferase</keyword>
<keyword id="KW-1278">Translocase</keyword>
<keyword id="KW-0812">Transmembrane</keyword>
<keyword id="KW-1133">Transmembrane helix</keyword>
<dbReference type="EC" id="7.2.1.4"/>
<dbReference type="EMBL" id="AF042381">
    <property type="protein sequence ID" value="AAC38330.1"/>
    <property type="molecule type" value="Genomic_DNA"/>
</dbReference>
<dbReference type="EMBL" id="AE008384">
    <property type="protein sequence ID" value="AAM31243.1"/>
    <property type="molecule type" value="Genomic_DNA"/>
</dbReference>
<dbReference type="RefSeq" id="WP_011033493.1">
    <property type="nucleotide sequence ID" value="NC_003901.1"/>
</dbReference>
<dbReference type="SMR" id="P80651"/>
<dbReference type="GeneID" id="82160597"/>
<dbReference type="KEGG" id="mma:MM_1547"/>
<dbReference type="PATRIC" id="fig|192952.21.peg.1788"/>
<dbReference type="eggNOG" id="arCOG04870">
    <property type="taxonomic scope" value="Archaea"/>
</dbReference>
<dbReference type="HOGENOM" id="CLU_958513_0_0_2"/>
<dbReference type="BRENDA" id="2.1.1.86">
    <property type="organism ID" value="3270"/>
</dbReference>
<dbReference type="UniPathway" id="UPA00640">
    <property type="reaction ID" value="UER00698"/>
</dbReference>
<dbReference type="Proteomes" id="UP000000595">
    <property type="component" value="Chromosome"/>
</dbReference>
<dbReference type="GO" id="GO:0005737">
    <property type="term" value="C:cytoplasm"/>
    <property type="evidence" value="ECO:0007669"/>
    <property type="project" value="InterPro"/>
</dbReference>
<dbReference type="GO" id="GO:0005886">
    <property type="term" value="C:plasma membrane"/>
    <property type="evidence" value="ECO:0007669"/>
    <property type="project" value="UniProtKB-SubCell"/>
</dbReference>
<dbReference type="GO" id="GO:0012506">
    <property type="term" value="C:vesicle membrane"/>
    <property type="evidence" value="ECO:0007669"/>
    <property type="project" value="InterPro"/>
</dbReference>
<dbReference type="GO" id="GO:0030269">
    <property type="term" value="F:tetrahydromethanopterin S-methyltransferase activity"/>
    <property type="evidence" value="ECO:0007669"/>
    <property type="project" value="UniProtKB-UniRule"/>
</dbReference>
<dbReference type="GO" id="GO:0019386">
    <property type="term" value="P:methanogenesis, from carbon dioxide"/>
    <property type="evidence" value="ECO:0007669"/>
    <property type="project" value="UniProtKB-UniRule"/>
</dbReference>
<dbReference type="GO" id="GO:0032259">
    <property type="term" value="P:methylation"/>
    <property type="evidence" value="ECO:0007669"/>
    <property type="project" value="UniProtKB-KW"/>
</dbReference>
<dbReference type="GO" id="GO:0006730">
    <property type="term" value="P:one-carbon metabolic process"/>
    <property type="evidence" value="ECO:0007669"/>
    <property type="project" value="UniProtKB-UniRule"/>
</dbReference>
<dbReference type="HAMAP" id="MF_01098">
    <property type="entry name" value="MtrE"/>
    <property type="match status" value="1"/>
</dbReference>
<dbReference type="InterPro" id="IPR005780">
    <property type="entry name" value="MeTrfase_E"/>
</dbReference>
<dbReference type="NCBIfam" id="TIGR01113">
    <property type="entry name" value="mtrE"/>
    <property type="match status" value="1"/>
</dbReference>
<dbReference type="Pfam" id="PF04206">
    <property type="entry name" value="MtrE"/>
    <property type="match status" value="1"/>
</dbReference>
<dbReference type="PIRSF" id="PIRSF016509">
    <property type="entry name" value="MtrE"/>
    <property type="match status" value="1"/>
</dbReference>
<name>MTRE_METMA</name>
<organism>
    <name type="scientific">Methanosarcina mazei (strain ATCC BAA-159 / DSM 3647 / Goe1 / Go1 / JCM 11833 / OCM 88)</name>
    <name type="common">Methanosarcina frisia</name>
    <dbReference type="NCBI Taxonomy" id="192952"/>
    <lineage>
        <taxon>Archaea</taxon>
        <taxon>Methanobacteriati</taxon>
        <taxon>Methanobacteriota</taxon>
        <taxon>Stenosarchaea group</taxon>
        <taxon>Methanomicrobia</taxon>
        <taxon>Methanosarcinales</taxon>
        <taxon>Methanosarcinaceae</taxon>
        <taxon>Methanosarcina</taxon>
    </lineage>
</organism>
<proteinExistence type="evidence at protein level"/>
<sequence length="304" mass="32489">MEPLIGMGVLALIGVAATIAGASEDLESDIGSQSNPNSQVQLAPQMMFPHRIFNKAISGEPPSNALMCSIGAAIATVLISEFTVSPLFALVFGSVIAASVHATFAVTATMGRCASQSRFKQPIYLDMIRSHTPAIMGYAFITTFCVLIVSYLMTVVLGHPFPLTMLAFIWGITIGAIGSSTGDVHYGAEREFQQFEFGSGLNASNSGNIVRYAESGLRNGFDNSWFCSKFGGPTTGIAFGMTVFLGSWITTIFDPAQGLSMGWLSVIAGVIIVLILIIWNWKIEVQARKAYGPYKEDKAEEASA</sequence>
<protein>
    <recommendedName>
        <fullName>Tetrahydromethanopterin S-methyltransferase subunit E</fullName>
        <ecNumber>7.2.1.4</ecNumber>
    </recommendedName>
    <alternativeName>
        <fullName>N5-methyltetrahydromethanopterin--coenzyme M methyltransferase subunit E</fullName>
    </alternativeName>
</protein>
<comment type="function">
    <text>Part of a complex that catalyzes the formation of methyl-coenzyme M and tetrahydromethanopterin from coenzyme M and methyl-tetrahydromethanopterin. This is an energy-conserving, sodium-ion translocating step.</text>
</comment>
<comment type="catalytic activity">
    <reaction>
        <text>5-methyl-5,6,7,8-tetrahydromethanopterin + coenzyme M + 2 Na(+)(in) = 5,6,7,8-tetrahydromethanopterin + methyl-coenzyme M + 2 Na(+)(out)</text>
        <dbReference type="Rhea" id="RHEA:53492"/>
        <dbReference type="ChEBI" id="CHEBI:29101"/>
        <dbReference type="ChEBI" id="CHEBI:58103"/>
        <dbReference type="ChEBI" id="CHEBI:58116"/>
        <dbReference type="ChEBI" id="CHEBI:58286"/>
        <dbReference type="ChEBI" id="CHEBI:58319"/>
        <dbReference type="EC" id="7.2.1.4"/>
    </reaction>
</comment>
<comment type="pathway">
    <text>One-carbon metabolism; methanogenesis from CO(2); methyl-coenzyme M from 5,10-methylene-5,6,7,8-tetrahydromethanopterin: step 2/2.</text>
</comment>
<comment type="subunit">
    <text evidence="1">The complex is composed of 8 subunits; MtrA, MtrB, MtrC, MtrD, MtrE, MtrF, MtrG and MtrH.</text>
</comment>
<comment type="subcellular location">
    <subcellularLocation>
        <location evidence="3">Cell membrane</location>
        <topology evidence="3">Multi-pass membrane protein</topology>
    </subcellularLocation>
</comment>
<comment type="similarity">
    <text evidence="3">Belongs to the MtrE family.</text>
</comment>
<reference key="1">
    <citation type="journal article" date="1998" name="FEBS Lett.">
        <title>Cloning, sequencing and expression of the genes encoding the sodium translocating N5-methyltetrahydromethanopterin:coenzyme M methyltransferase of the methylotrophic archaeon Methanosarcina mazei Go1.</title>
        <authorList>
            <person name="Lienard T."/>
            <person name="Gottschalk G."/>
        </authorList>
    </citation>
    <scope>NUCLEOTIDE SEQUENCE [GENOMIC DNA]</scope>
    <source>
        <strain>ATCC BAA-159 / DSM 3647 / Goe1 / Go1 / JCM 11833 / OCM 88</strain>
    </source>
</reference>
<reference key="2">
    <citation type="journal article" date="2002" name="J. Mol. Microbiol. Biotechnol.">
        <title>The genome of Methanosarcina mazei: evidence for lateral gene transfer between Bacteria and Archaea.</title>
        <authorList>
            <person name="Deppenmeier U."/>
            <person name="Johann A."/>
            <person name="Hartsch T."/>
            <person name="Merkl R."/>
            <person name="Schmitz R.A."/>
            <person name="Martinez-Arias R."/>
            <person name="Henne A."/>
            <person name="Wiezer A."/>
            <person name="Baeumer S."/>
            <person name="Jacobi C."/>
            <person name="Brueggemann H."/>
            <person name="Lienard T."/>
            <person name="Christmann A."/>
            <person name="Boemecke M."/>
            <person name="Steckel S."/>
            <person name="Bhattacharyya A."/>
            <person name="Lykidis A."/>
            <person name="Overbeek R."/>
            <person name="Klenk H.-P."/>
            <person name="Gunsalus R.P."/>
            <person name="Fritz H.-J."/>
            <person name="Gottschalk G."/>
        </authorList>
    </citation>
    <scope>NUCLEOTIDE SEQUENCE [LARGE SCALE GENOMIC DNA]</scope>
    <source>
        <strain>ATCC BAA-159 / DSM 3647 / Goe1 / Go1 / JCM 11833 / OCM 88</strain>
    </source>
</reference>
<reference key="3">
    <citation type="journal article" date="1996" name="Eur. J. Biochem.">
        <title>Sodium ion translocation by N5-methyltetrahydromethanopterin: coenzyme M methyltransferase from Methanosarcina mazei Go1 reconstituted in ether lipid liposomes.</title>
        <authorList>
            <person name="Lienard T."/>
            <person name="Becher B."/>
            <person name="Marschall M."/>
            <person name="Bowien S."/>
            <person name="Gottschalk G."/>
        </authorList>
    </citation>
    <scope>PROTEIN SEQUENCE OF 1-15</scope>
    <source>
        <strain>ATCC BAA-159 / DSM 3647 / Goe1 / Go1 / JCM 11833 / OCM 88</strain>
    </source>
</reference>
<feature type="chain" id="PRO_0000147541" description="Tetrahydromethanopterin S-methyltransferase subunit E">
    <location>
        <begin position="1"/>
        <end position="304"/>
    </location>
</feature>
<feature type="transmembrane region" description="Helical" evidence="2">
    <location>
        <begin position="3"/>
        <end position="23"/>
    </location>
</feature>
<feature type="transmembrane region" description="Helical" evidence="2">
    <location>
        <begin position="77"/>
        <end position="97"/>
    </location>
</feature>
<feature type="transmembrane region" description="Helical" evidence="2">
    <location>
        <begin position="133"/>
        <end position="153"/>
    </location>
</feature>
<feature type="transmembrane region" description="Helical" evidence="2">
    <location>
        <begin position="155"/>
        <end position="175"/>
    </location>
</feature>
<feature type="transmembrane region" description="Helical" evidence="2">
    <location>
        <begin position="233"/>
        <end position="253"/>
    </location>
</feature>
<feature type="transmembrane region" description="Helical" evidence="2">
    <location>
        <begin position="259"/>
        <end position="279"/>
    </location>
</feature>
<feature type="sequence conflict" description="In Ref. 3; AA sequence." evidence="3" ref="3">
    <original>E</original>
    <variation>D</variation>
    <location>
        <position position="2"/>
    </location>
</feature>
<feature type="sequence conflict" description="In Ref. 3; AA sequence." evidence="3" ref="3">
    <original>L</original>
    <variation>R</variation>
    <location>
        <position position="4"/>
    </location>
</feature>
<feature type="sequence conflict" description="In Ref. 3; AA sequence." evidence="3" ref="3">
    <original>M</original>
    <variation>A</variation>
    <location>
        <position position="7"/>
    </location>
</feature>
<feature type="sequence conflict" description="In Ref. 3; AA sequence." evidence="3" ref="3">
    <original>V</original>
    <variation>G</variation>
    <location>
        <position position="9"/>
    </location>
</feature>
<feature type="sequence conflict" description="In Ref. 3; AA sequence." evidence="3" ref="3">
    <original>L</original>
    <variation>I</variation>
    <location>
        <position position="12"/>
    </location>
</feature>